<accession>Q4R796</accession>
<organism>
    <name type="scientific">Macaca fascicularis</name>
    <name type="common">Crab-eating macaque</name>
    <name type="synonym">Cynomolgus monkey</name>
    <dbReference type="NCBI Taxonomy" id="9541"/>
    <lineage>
        <taxon>Eukaryota</taxon>
        <taxon>Metazoa</taxon>
        <taxon>Chordata</taxon>
        <taxon>Craniata</taxon>
        <taxon>Vertebrata</taxon>
        <taxon>Euteleostomi</taxon>
        <taxon>Mammalia</taxon>
        <taxon>Eutheria</taxon>
        <taxon>Euarchontoglires</taxon>
        <taxon>Primates</taxon>
        <taxon>Haplorrhini</taxon>
        <taxon>Catarrhini</taxon>
        <taxon>Cercopithecidae</taxon>
        <taxon>Cercopithecinae</taxon>
        <taxon>Macaca</taxon>
    </lineage>
</organism>
<sequence length="722" mass="84086">MGPKAKKSGSKKKKVTKAERLKLLQEEEDRRLKEEEEARLKYEKEEMERLEIQRIEKEKWNRLEAKDLERRNEELEELYLLERCFPEAEKLKQETRMLSQWKHYIQCDGSPDPSIAQEMNTFISLWKEKTNETFEEVIEKSKVVLNLIEKLKFILLETPLCDLQDKNIIQYQESILQLQELLHLKFNVATEILLRQASTLADLDSGNMEKVIKDENVTLYVWANLKKNPRHRSVRFSETQIGFEIPRILATSDIAVRLLHTHYDHVSALHPVSTPSKEHTSSATELVKDDVENVEKAISKEVEEESKQQEKQSHLIQEEKLKVEEEQDDIEVKMGSAEEESEAIKCELEMKVLSETVSAAQLLLVENSSEKPDFFENDMVDLFQFTTLGGVYHLDILELPPQCKPVKGWMIVEILKEGLQKYTYPPETTEDFETENAFPPIEVTLEVHENVIFFENPMVVRWDAEGKHWRTDGISNVSYKPNERLITFSLDTFGPVTLIQDAHINMPYQSWELRPLDVNKVLLTVTTVFTEIQIQIKENLCMLSSVKLKDKKHISILEGTWMTPIPFIIALKEAGLNIFPTRYSHFYVVINNKVPLVEVKAYRQMALLSSTFAFGWSKWNLLCNSTKVVFKVREHLPEECTENPNWALLMFSGDRAQRLKIKEESEAFSEALKEETEFHSTLYHMVRDFASKEAMEKVRSSNCQFVNSVCHMLLSTRLLSYS</sequence>
<protein>
    <recommendedName>
        <fullName evidence="4">Dynein axonemal intermediate chain 7</fullName>
    </recommendedName>
</protein>
<gene>
    <name evidence="1" type="primary">DNAI7</name>
    <name type="ORF">QtsA-15847</name>
</gene>
<keyword id="KW-0966">Cell projection</keyword>
<keyword id="KW-0963">Cytoplasm</keyword>
<keyword id="KW-1185">Reference proteome</keyword>
<keyword id="KW-0832">Ubl conjugation</keyword>
<name>DNAI7_MACFA</name>
<reference key="1">
    <citation type="submission" date="2005-06" db="EMBL/GenBank/DDBJ databases">
        <title>DNA sequences of macaque genes expressed in brain or testis and its evolutionary implications.</title>
        <authorList>
            <consortium name="International consortium for macaque cDNA sequencing and analysis"/>
        </authorList>
    </citation>
    <scope>NUCLEOTIDE SEQUENCE [LARGE SCALE MRNA]</scope>
    <source>
        <tissue>Testis</tissue>
    </source>
</reference>
<dbReference type="EMBL" id="AB168925">
    <property type="protein sequence ID" value="BAE01026.1"/>
    <property type="molecule type" value="mRNA"/>
</dbReference>
<dbReference type="SMR" id="Q4R796"/>
<dbReference type="STRING" id="9541.ENSMFAP00000017953"/>
<dbReference type="eggNOG" id="ENOG502QQM9">
    <property type="taxonomic scope" value="Eukaryota"/>
</dbReference>
<dbReference type="Proteomes" id="UP000233100">
    <property type="component" value="Unplaced"/>
</dbReference>
<dbReference type="GO" id="GO:0005858">
    <property type="term" value="C:axonemal dynein complex"/>
    <property type="evidence" value="ECO:0000250"/>
    <property type="project" value="UniProtKB"/>
</dbReference>
<dbReference type="GO" id="GO:0005929">
    <property type="term" value="C:cilium"/>
    <property type="evidence" value="ECO:0000250"/>
    <property type="project" value="UniProtKB"/>
</dbReference>
<dbReference type="GO" id="GO:0048487">
    <property type="term" value="F:beta-tubulin binding"/>
    <property type="evidence" value="ECO:0000250"/>
    <property type="project" value="UniProtKB"/>
</dbReference>
<dbReference type="GO" id="GO:0008017">
    <property type="term" value="F:microtubule binding"/>
    <property type="evidence" value="ECO:0000250"/>
    <property type="project" value="UniProtKB"/>
</dbReference>
<dbReference type="InterPro" id="IPR022110">
    <property type="entry name" value="CASC1_C"/>
</dbReference>
<dbReference type="InterPro" id="IPR031826">
    <property type="entry name" value="IC97/Casc1_N"/>
</dbReference>
<dbReference type="InterPro" id="IPR023247">
    <property type="entry name" value="IC97/Dnai7-like"/>
</dbReference>
<dbReference type="PANTHER" id="PTHR20929:SF11">
    <property type="entry name" value="DYNEIN AXONEMAL INTERMEDIATE CHAIN 7"/>
    <property type="match status" value="1"/>
</dbReference>
<dbReference type="PANTHER" id="PTHR20929">
    <property type="entry name" value="LUNG ADENOMA SUSCEPTIBILITY 1-RELATED"/>
    <property type="match status" value="1"/>
</dbReference>
<dbReference type="Pfam" id="PF12366">
    <property type="entry name" value="Casc1_C"/>
    <property type="match status" value="1"/>
</dbReference>
<dbReference type="Pfam" id="PF15927">
    <property type="entry name" value="Casc1_N"/>
    <property type="match status" value="1"/>
</dbReference>
<dbReference type="PRINTS" id="PR02043">
    <property type="entry name" value="CANCERSCCP1"/>
</dbReference>
<evidence type="ECO:0000250" key="1">
    <source>
        <dbReference type="UniProtKB" id="Q6TDU7"/>
    </source>
</evidence>
<evidence type="ECO:0000250" key="2">
    <source>
        <dbReference type="UniProtKB" id="Q6TDU8"/>
    </source>
</evidence>
<evidence type="ECO:0000256" key="3">
    <source>
        <dbReference type="SAM" id="MobiDB-lite"/>
    </source>
</evidence>
<evidence type="ECO:0000305" key="4"/>
<feature type="chain" id="PRO_0000332732" description="Dynein axonemal intermediate chain 7">
    <location>
        <begin position="1"/>
        <end position="722"/>
    </location>
</feature>
<feature type="region of interest" description="Disordered" evidence="3">
    <location>
        <begin position="1"/>
        <end position="20"/>
    </location>
</feature>
<feature type="compositionally biased region" description="Basic residues" evidence="3">
    <location>
        <begin position="1"/>
        <end position="15"/>
    </location>
</feature>
<proteinExistence type="evidence at transcript level"/>
<comment type="function">
    <text evidence="2">Via its association with the multisubunit axonemal dynein complex, is potentially involved in the regulation of cilia function. May act as a cell cycle regulator.</text>
</comment>
<comment type="subunit">
    <text evidence="2">Part of the multisubunit axonemal dynein complex formed at least of two heavy chains and a number of intermediate and light chains. Associates with tubulin. Interacts with microtubule.</text>
</comment>
<comment type="subcellular location">
    <subcellularLocation>
        <location evidence="2">Cell projection</location>
        <location evidence="2">Cilium</location>
    </subcellularLocation>
    <subcellularLocation>
        <location evidence="2">Cytoplasm</location>
    </subcellularLocation>
    <text evidence="2">Colocalizes with microtubules in interphase.</text>
</comment>
<comment type="PTM">
    <text evidence="2">Ubiquitinated. Ubiquitination leads to its degradation through the 26S proteasome. Ubiquitin-proteasome-mediated DNAI7 degradation occurs in mitosis.</text>
</comment>
<comment type="similarity">
    <text evidence="4">Belongs to the DNAI7 family.</text>
</comment>